<reference key="1">
    <citation type="journal article" date="2009" name="Nature">
        <title>Evolution of pathogenicity and sexual reproduction in eight Candida genomes.</title>
        <authorList>
            <person name="Butler G."/>
            <person name="Rasmussen M.D."/>
            <person name="Lin M.F."/>
            <person name="Santos M.A.S."/>
            <person name="Sakthikumar S."/>
            <person name="Munro C.A."/>
            <person name="Rheinbay E."/>
            <person name="Grabherr M."/>
            <person name="Forche A."/>
            <person name="Reedy J.L."/>
            <person name="Agrafioti I."/>
            <person name="Arnaud M.B."/>
            <person name="Bates S."/>
            <person name="Brown A.J.P."/>
            <person name="Brunke S."/>
            <person name="Costanzo M.C."/>
            <person name="Fitzpatrick D.A."/>
            <person name="de Groot P.W.J."/>
            <person name="Harris D."/>
            <person name="Hoyer L.L."/>
            <person name="Hube B."/>
            <person name="Klis F.M."/>
            <person name="Kodira C."/>
            <person name="Lennard N."/>
            <person name="Logue M.E."/>
            <person name="Martin R."/>
            <person name="Neiman A.M."/>
            <person name="Nikolaou E."/>
            <person name="Quail M.A."/>
            <person name="Quinn J."/>
            <person name="Santos M.C."/>
            <person name="Schmitzberger F.F."/>
            <person name="Sherlock G."/>
            <person name="Shah P."/>
            <person name="Silverstein K.A.T."/>
            <person name="Skrzypek M.S."/>
            <person name="Soll D."/>
            <person name="Staggs R."/>
            <person name="Stansfield I."/>
            <person name="Stumpf M.P.H."/>
            <person name="Sudbery P.E."/>
            <person name="Srikantha T."/>
            <person name="Zeng Q."/>
            <person name="Berman J."/>
            <person name="Berriman M."/>
            <person name="Heitman J."/>
            <person name="Gow N.A.R."/>
            <person name="Lorenz M.C."/>
            <person name="Birren B.W."/>
            <person name="Kellis M."/>
            <person name="Cuomo C.A."/>
        </authorList>
    </citation>
    <scope>NUCLEOTIDE SEQUENCE [LARGE SCALE GENOMIC DNA]</scope>
    <source>
        <strain>ATCC 11503 / BCRC 21390 / CBS 2605 / JCM 1781 / NBRC 1676 / NRRL YB-4239</strain>
    </source>
</reference>
<organism>
    <name type="scientific">Lodderomyces elongisporus (strain ATCC 11503 / CBS 2605 / JCM 1781 / NBRC 1676 / NRRL YB-4239)</name>
    <name type="common">Yeast</name>
    <name type="synonym">Saccharomyces elongisporus</name>
    <dbReference type="NCBI Taxonomy" id="379508"/>
    <lineage>
        <taxon>Eukaryota</taxon>
        <taxon>Fungi</taxon>
        <taxon>Dikarya</taxon>
        <taxon>Ascomycota</taxon>
        <taxon>Saccharomycotina</taxon>
        <taxon>Pichiomycetes</taxon>
        <taxon>Debaryomycetaceae</taxon>
        <taxon>Candida/Lodderomyces clade</taxon>
        <taxon>Lodderomyces</taxon>
    </lineage>
</organism>
<accession>A5DZT7</accession>
<proteinExistence type="inferred from homology"/>
<name>DBP10_LODEL</name>
<dbReference type="EC" id="3.6.4.13"/>
<dbReference type="EMBL" id="CH981526">
    <property type="protein sequence ID" value="EDK44695.1"/>
    <property type="molecule type" value="Genomic_DNA"/>
</dbReference>
<dbReference type="RefSeq" id="XP_001526316.1">
    <property type="nucleotide sequence ID" value="XM_001526266.1"/>
</dbReference>
<dbReference type="SMR" id="A5DZT7"/>
<dbReference type="FunCoup" id="A5DZT7">
    <property type="interactions" value="1046"/>
</dbReference>
<dbReference type="STRING" id="379508.A5DZT7"/>
<dbReference type="GeneID" id="5233596"/>
<dbReference type="KEGG" id="lel:PVL30_003712"/>
<dbReference type="VEuPathDB" id="FungiDB:LELG_02874"/>
<dbReference type="eggNOG" id="KOG0337">
    <property type="taxonomic scope" value="Eukaryota"/>
</dbReference>
<dbReference type="HOGENOM" id="CLU_003041_5_2_1"/>
<dbReference type="InParanoid" id="A5DZT7"/>
<dbReference type="OMA" id="EDQFGMM"/>
<dbReference type="OrthoDB" id="10261375at2759"/>
<dbReference type="Proteomes" id="UP000001996">
    <property type="component" value="Unassembled WGS sequence"/>
</dbReference>
<dbReference type="GO" id="GO:0005829">
    <property type="term" value="C:cytosol"/>
    <property type="evidence" value="ECO:0007669"/>
    <property type="project" value="TreeGrafter"/>
</dbReference>
<dbReference type="GO" id="GO:0005730">
    <property type="term" value="C:nucleolus"/>
    <property type="evidence" value="ECO:0007669"/>
    <property type="project" value="UniProtKB-SubCell"/>
</dbReference>
<dbReference type="GO" id="GO:0030687">
    <property type="term" value="C:preribosome, large subunit precursor"/>
    <property type="evidence" value="ECO:0007669"/>
    <property type="project" value="EnsemblFungi"/>
</dbReference>
<dbReference type="GO" id="GO:0005524">
    <property type="term" value="F:ATP binding"/>
    <property type="evidence" value="ECO:0007669"/>
    <property type="project" value="UniProtKB-KW"/>
</dbReference>
<dbReference type="GO" id="GO:0016887">
    <property type="term" value="F:ATP hydrolysis activity"/>
    <property type="evidence" value="ECO:0007669"/>
    <property type="project" value="RHEA"/>
</dbReference>
<dbReference type="GO" id="GO:0042802">
    <property type="term" value="F:identical protein binding"/>
    <property type="evidence" value="ECO:0007669"/>
    <property type="project" value="EnsemblFungi"/>
</dbReference>
<dbReference type="GO" id="GO:0003723">
    <property type="term" value="F:RNA binding"/>
    <property type="evidence" value="ECO:0007669"/>
    <property type="project" value="UniProtKB-KW"/>
</dbReference>
<dbReference type="GO" id="GO:0003724">
    <property type="term" value="F:RNA helicase activity"/>
    <property type="evidence" value="ECO:0007669"/>
    <property type="project" value="UniProtKB-EC"/>
</dbReference>
<dbReference type="GO" id="GO:1902626">
    <property type="term" value="P:assembly of large subunit precursor of preribosome"/>
    <property type="evidence" value="ECO:0007669"/>
    <property type="project" value="EnsemblFungi"/>
</dbReference>
<dbReference type="GO" id="GO:0000466">
    <property type="term" value="P:maturation of 5.8S rRNA from tricistronic rRNA transcript (SSU-rRNA, 5.8S rRNA, LSU-rRNA)"/>
    <property type="evidence" value="ECO:0007669"/>
    <property type="project" value="EnsemblFungi"/>
</dbReference>
<dbReference type="GO" id="GO:0000463">
    <property type="term" value="P:maturation of LSU-rRNA from tricistronic rRNA transcript (SSU-rRNA, 5.8S rRNA, LSU-rRNA)"/>
    <property type="evidence" value="ECO:0007669"/>
    <property type="project" value="EnsemblFungi"/>
</dbReference>
<dbReference type="CDD" id="cd17959">
    <property type="entry name" value="DEADc_DDX54"/>
    <property type="match status" value="1"/>
</dbReference>
<dbReference type="CDD" id="cd18787">
    <property type="entry name" value="SF2_C_DEAD"/>
    <property type="match status" value="1"/>
</dbReference>
<dbReference type="Gene3D" id="3.40.50.300">
    <property type="entry name" value="P-loop containing nucleotide triphosphate hydrolases"/>
    <property type="match status" value="2"/>
</dbReference>
<dbReference type="InterPro" id="IPR012541">
    <property type="entry name" value="DBP10_C"/>
</dbReference>
<dbReference type="InterPro" id="IPR033517">
    <property type="entry name" value="DDX54/DBP10_DEAD-box_helicase"/>
</dbReference>
<dbReference type="InterPro" id="IPR011545">
    <property type="entry name" value="DEAD/DEAH_box_helicase_dom"/>
</dbReference>
<dbReference type="InterPro" id="IPR050079">
    <property type="entry name" value="DEAD_box_RNA_helicase"/>
</dbReference>
<dbReference type="InterPro" id="IPR014001">
    <property type="entry name" value="Helicase_ATP-bd"/>
</dbReference>
<dbReference type="InterPro" id="IPR001650">
    <property type="entry name" value="Helicase_C-like"/>
</dbReference>
<dbReference type="InterPro" id="IPR027417">
    <property type="entry name" value="P-loop_NTPase"/>
</dbReference>
<dbReference type="InterPro" id="IPR000629">
    <property type="entry name" value="RNA-helicase_DEAD-box_CS"/>
</dbReference>
<dbReference type="InterPro" id="IPR014014">
    <property type="entry name" value="RNA_helicase_DEAD_Q_motif"/>
</dbReference>
<dbReference type="PANTHER" id="PTHR47959">
    <property type="entry name" value="ATP-DEPENDENT RNA HELICASE RHLE-RELATED"/>
    <property type="match status" value="1"/>
</dbReference>
<dbReference type="PANTHER" id="PTHR47959:SF8">
    <property type="entry name" value="RNA HELICASE"/>
    <property type="match status" value="1"/>
</dbReference>
<dbReference type="Pfam" id="PF08147">
    <property type="entry name" value="DBP10CT"/>
    <property type="match status" value="1"/>
</dbReference>
<dbReference type="Pfam" id="PF00270">
    <property type="entry name" value="DEAD"/>
    <property type="match status" value="1"/>
</dbReference>
<dbReference type="Pfam" id="PF00271">
    <property type="entry name" value="Helicase_C"/>
    <property type="match status" value="1"/>
</dbReference>
<dbReference type="SMART" id="SM01123">
    <property type="entry name" value="DBP10CT"/>
    <property type="match status" value="1"/>
</dbReference>
<dbReference type="SMART" id="SM00487">
    <property type="entry name" value="DEXDc"/>
    <property type="match status" value="1"/>
</dbReference>
<dbReference type="SMART" id="SM00490">
    <property type="entry name" value="HELICc"/>
    <property type="match status" value="1"/>
</dbReference>
<dbReference type="SUPFAM" id="SSF52540">
    <property type="entry name" value="P-loop containing nucleoside triphosphate hydrolases"/>
    <property type="match status" value="2"/>
</dbReference>
<dbReference type="PROSITE" id="PS00039">
    <property type="entry name" value="DEAD_ATP_HELICASE"/>
    <property type="match status" value="1"/>
</dbReference>
<dbReference type="PROSITE" id="PS51192">
    <property type="entry name" value="HELICASE_ATP_BIND_1"/>
    <property type="match status" value="1"/>
</dbReference>
<dbReference type="PROSITE" id="PS51194">
    <property type="entry name" value="HELICASE_CTER"/>
    <property type="match status" value="1"/>
</dbReference>
<dbReference type="PROSITE" id="PS51195">
    <property type="entry name" value="Q_MOTIF"/>
    <property type="match status" value="1"/>
</dbReference>
<sequence length="948" mass="107908">MTMSDIEDSDVENYDIAGKLALRSDDELGSDDEQNTSGEEGEEVELQDEIVSSDDDDDDGDKGKDTGKMPPTKKAKLDRKPGSDFDFASLDFEAEDNEEEDKTLSSILALSNPTAKKAKAGSFASFGFSKFLLANIAKKGYKQPTPIQRRSIPLIIDNRDVVGMARTGSGKTAAFVLPLIEKLKLRSPSGVRAVILSPSRELALQTYKQVKEFSHGTNLQSIVLIGGDSLEEDFGKMMTKPDIIVCTPGRFLHLKVEMQYDLMSVQYIVFDEADRLFEMGFAEQLNELLLALPSNRQSLLFSATLPRSLVEFAKAGLTNPVLVRLDADSKLSENLQMAYFTTKRNEREANLLYILQEVIKMPLGTPEEVKKLAAMDKRSIESDEENEEAKEQNNGKKRKYKFKKERMPSAKELPSEKSTIIFVPTKHHVEYVTSLLKDAGYLVSYIYGTLDQHARKNQLYLFRIGLTKILVVTDVAARGIDIPVLANVINFTLPGSSKIFIHRVGRTARAGNKGWAYSIVNSSELPYLLDLEIFLGKKLLLTSMHEAKCELLKKKQGGSFIPPRINYTERLVVGAIPRLDLETFQELYENLLRNNYEIKVLKDVAAKGEKLYHRTRQPASQESLKRSKEILETNSWDDQHLLFGENLEKMKDDFLAKLQNRNVKETVFELKKKGVKENDSLAEFMHRRRRQLAPIQRKAQERKELLQKERLAGLSHGIEEEVLKIDGEASGYNQNVDEAELQETFELGDEAHNKKKTFKDPQFFMSHYAPASVIQDQQLSIASSFANDAQAATFDLDNDDKLQKNKQQVMKWDKKKGKYINSMSTDKKYIISENGTKIPATFRSGKFDEWRKQRNLKPTSSLTNNETPENNKRFKHKKQSVPKLPDKYRDDYHKQKQKVEKALDSGMRVKGYNKPGMQQELKSTEQIRKARAIKEQRRAKNARPSRRK</sequence>
<protein>
    <recommendedName>
        <fullName>ATP-dependent RNA helicase DBP10</fullName>
        <ecNumber>3.6.4.13</ecNumber>
    </recommendedName>
</protein>
<evidence type="ECO:0000250" key="1"/>
<evidence type="ECO:0000255" key="2">
    <source>
        <dbReference type="PROSITE-ProRule" id="PRU00541"/>
    </source>
</evidence>
<evidence type="ECO:0000255" key="3">
    <source>
        <dbReference type="PROSITE-ProRule" id="PRU00542"/>
    </source>
</evidence>
<evidence type="ECO:0000256" key="4">
    <source>
        <dbReference type="SAM" id="MobiDB-lite"/>
    </source>
</evidence>
<evidence type="ECO:0000305" key="5"/>
<gene>
    <name type="primary">DBP10</name>
    <name type="ORF">LELG_02874</name>
</gene>
<keyword id="KW-0067">ATP-binding</keyword>
<keyword id="KW-0347">Helicase</keyword>
<keyword id="KW-0378">Hydrolase</keyword>
<keyword id="KW-0547">Nucleotide-binding</keyword>
<keyword id="KW-0539">Nucleus</keyword>
<keyword id="KW-1185">Reference proteome</keyword>
<keyword id="KW-0690">Ribosome biogenesis</keyword>
<keyword id="KW-0694">RNA-binding</keyword>
<keyword id="KW-0698">rRNA processing</keyword>
<feature type="chain" id="PRO_0000294665" description="ATP-dependent RNA helicase DBP10">
    <location>
        <begin position="1"/>
        <end position="948"/>
    </location>
</feature>
<feature type="domain" description="Helicase ATP-binding" evidence="2">
    <location>
        <begin position="152"/>
        <end position="323"/>
    </location>
</feature>
<feature type="domain" description="Helicase C-terminal" evidence="3">
    <location>
        <begin position="395"/>
        <end position="552"/>
    </location>
</feature>
<feature type="region of interest" description="Disordered" evidence="4">
    <location>
        <begin position="1"/>
        <end position="80"/>
    </location>
</feature>
<feature type="region of interest" description="Disordered" evidence="4">
    <location>
        <begin position="378"/>
        <end position="408"/>
    </location>
</feature>
<feature type="region of interest" description="Disordered" evidence="4">
    <location>
        <begin position="849"/>
        <end position="948"/>
    </location>
</feature>
<feature type="short sequence motif" description="Q motif">
    <location>
        <begin position="121"/>
        <end position="149"/>
    </location>
</feature>
<feature type="short sequence motif" description="DEAD box">
    <location>
        <begin position="271"/>
        <end position="274"/>
    </location>
</feature>
<feature type="compositionally biased region" description="Acidic residues" evidence="4">
    <location>
        <begin position="1"/>
        <end position="13"/>
    </location>
</feature>
<feature type="compositionally biased region" description="Acidic residues" evidence="4">
    <location>
        <begin position="27"/>
        <end position="60"/>
    </location>
</feature>
<feature type="compositionally biased region" description="Basic residues" evidence="4">
    <location>
        <begin position="395"/>
        <end position="404"/>
    </location>
</feature>
<feature type="compositionally biased region" description="Polar residues" evidence="4">
    <location>
        <begin position="856"/>
        <end position="868"/>
    </location>
</feature>
<feature type="compositionally biased region" description="Basic and acidic residues" evidence="4">
    <location>
        <begin position="884"/>
        <end position="903"/>
    </location>
</feature>
<feature type="compositionally biased region" description="Basic and acidic residues" evidence="4">
    <location>
        <begin position="922"/>
        <end position="938"/>
    </location>
</feature>
<feature type="compositionally biased region" description="Basic residues" evidence="4">
    <location>
        <begin position="939"/>
        <end position="948"/>
    </location>
</feature>
<feature type="binding site" evidence="2">
    <location>
        <begin position="165"/>
        <end position="172"/>
    </location>
    <ligand>
        <name>ATP</name>
        <dbReference type="ChEBI" id="CHEBI:30616"/>
    </ligand>
</feature>
<comment type="function">
    <text evidence="1">ATP-binding RNA helicase involved in the biogenesis of 60S ribosomal subunits and is required for the normal formation of 25S and 5.8S rRNAs.</text>
</comment>
<comment type="catalytic activity">
    <reaction>
        <text>ATP + H2O = ADP + phosphate + H(+)</text>
        <dbReference type="Rhea" id="RHEA:13065"/>
        <dbReference type="ChEBI" id="CHEBI:15377"/>
        <dbReference type="ChEBI" id="CHEBI:15378"/>
        <dbReference type="ChEBI" id="CHEBI:30616"/>
        <dbReference type="ChEBI" id="CHEBI:43474"/>
        <dbReference type="ChEBI" id="CHEBI:456216"/>
        <dbReference type="EC" id="3.6.4.13"/>
    </reaction>
</comment>
<comment type="subcellular location">
    <subcellularLocation>
        <location evidence="1">Nucleus</location>
        <location evidence="1">Nucleolus</location>
    </subcellularLocation>
</comment>
<comment type="domain">
    <text>The Q motif is unique to and characteristic of the DEAD box family of RNA helicases and controls ATP binding and hydrolysis.</text>
</comment>
<comment type="similarity">
    <text evidence="5">Belongs to the DEAD box helicase family. DDX54/DBP10 subfamily.</text>
</comment>